<feature type="chain" id="PRO_0000096718" description="Cytosolic Fe-S cluster assembly factor NAR1">
    <location>
        <begin position="1"/>
        <end position="491"/>
    </location>
</feature>
<feature type="binding site" evidence="5">
    <location>
        <position position="20"/>
    </location>
    <ligand>
        <name>[4Fe-4S] cluster</name>
        <dbReference type="ChEBI" id="CHEBI:49883"/>
        <label>1</label>
    </ligand>
</feature>
<feature type="binding site" evidence="5">
    <location>
        <position position="59"/>
    </location>
    <ligand>
        <name>[4Fe-4S] cluster</name>
        <dbReference type="ChEBI" id="CHEBI:49883"/>
        <label>1</label>
    </ligand>
</feature>
<feature type="binding site" evidence="5">
    <location>
        <position position="62"/>
    </location>
    <ligand>
        <name>[4Fe-4S] cluster</name>
        <dbReference type="ChEBI" id="CHEBI:49883"/>
        <label>1</label>
    </ligand>
</feature>
<feature type="binding site" evidence="5">
    <location>
        <position position="65"/>
    </location>
    <ligand>
        <name>[4Fe-4S] cluster</name>
        <dbReference type="ChEBI" id="CHEBI:49883"/>
        <label>1</label>
    </ligand>
</feature>
<feature type="binding site" evidence="5">
    <location>
        <position position="177"/>
    </location>
    <ligand>
        <name>[4Fe-4S] cluster</name>
        <dbReference type="ChEBI" id="CHEBI:49883"/>
        <label>2</label>
    </ligand>
</feature>
<feature type="binding site" evidence="5">
    <location>
        <position position="231"/>
    </location>
    <ligand>
        <name>[4Fe-4S] cluster</name>
        <dbReference type="ChEBI" id="CHEBI:49883"/>
        <label>2</label>
    </ligand>
</feature>
<feature type="binding site" evidence="5">
    <location>
        <position position="412"/>
    </location>
    <ligand>
        <name>[4Fe-4S] cluster</name>
        <dbReference type="ChEBI" id="CHEBI:49883"/>
        <label>2</label>
    </ligand>
</feature>
<feature type="binding site" evidence="5">
    <location>
        <position position="416"/>
    </location>
    <ligand>
        <name>[4Fe-4S] cluster</name>
        <dbReference type="ChEBI" id="CHEBI:49883"/>
        <label>2</label>
    </ligand>
</feature>
<feature type="mutagenesis site" description="Weakly reduced iron content and impaired maturation of cytosolic Fe/S proteins. Strongly impaired maturation of cytosolic Fe/S proteins; when associated with A-62 or A-65." evidence="4">
    <original>C</original>
    <variation>A</variation>
    <location>
        <position position="20"/>
    </location>
</feature>
<feature type="mutagenesis site" description="Reduced iron content and strongly impaired maturation of cytosolic Fe/S proteins." evidence="4">
    <original>C</original>
    <variation>A</variation>
    <location>
        <position position="59"/>
    </location>
</feature>
<feature type="mutagenesis site" description="Reduced iron content and strongly impaired maturation of cytosolic Fe/S proteins." evidence="4">
    <original>C</original>
    <variation>A</variation>
    <location>
        <position position="62"/>
    </location>
</feature>
<feature type="mutagenesis site" description="Reduced iron content and strongly impaired maturation of cytosolic Fe/S proteins." evidence="4">
    <original>C</original>
    <variation>A</variation>
    <location>
        <position position="65"/>
    </location>
</feature>
<feature type="mutagenesis site" description="Impaired maturation of cytosolic Fe/S proteins. Reduced iron content and strongly impaired maturation of cytosolic Fe/S proteins; when associated with A-416." evidence="4">
    <original>C</original>
    <variation>A</variation>
    <location>
        <position position="177"/>
    </location>
</feature>
<feature type="mutagenesis site" description="Reduced iron content and strongly impaired maturation of cytosolic Fe/S proteins; when associated with S-412." evidence="4">
    <original>C</original>
    <variation>S</variation>
    <location>
        <position position="177"/>
    </location>
</feature>
<feature type="mutagenesis site" description="Impaired maturation of cytosolic Fe/S proteins. Strongly impaired maturation of cytosolic Fe/S proteins; when associated with A-416." evidence="4">
    <original>C</original>
    <variation>A</variation>
    <location>
        <position position="231"/>
    </location>
</feature>
<feature type="mutagenesis site" description="Reduced iron content and strongly impaired maturation of cytosolic Fe/S proteins; when associated with S-177." evidence="4">
    <original>C</original>
    <variation>S</variation>
    <location>
        <position position="412"/>
    </location>
</feature>
<feature type="mutagenesis site" description="Reduced iron content and strongly impaired maturation of cytosolic Fe/S proteins; when associated with A-177 or A-231." evidence="4">
    <original>C</original>
    <variation>A</variation>
    <location>
        <position position="416"/>
    </location>
</feature>
<evidence type="ECO:0000269" key="1">
    <source>
    </source>
</evidence>
<evidence type="ECO:0000269" key="2">
    <source>
    </source>
</evidence>
<evidence type="ECO:0000269" key="3">
    <source>
    </source>
</evidence>
<evidence type="ECO:0000269" key="4">
    <source>
    </source>
</evidence>
<evidence type="ECO:0000305" key="5"/>
<proteinExistence type="evidence at protein level"/>
<sequence>MSALLSESDLNDFISPALACVKPTQVSGGKKDNVNMNGEYEVSTEPDQLEKVSITLSDCLACSGCITSSEEILLSSQSHSVFLKNWGKLSQQQDKFLVVSVSPQCRLSLAQYYGLTLEAADLCLMNFFQKHFQCKYMVGTEMGRIISISKTVEKIIAHKKQKENTGADRKPLLSAVCPGFLIYTEKTKPQLVPMLLNVKSPQQITGSLIRATFESLAIARESFYHLSLMPCFDKKLEASRPESLDDGIDCVITPREIVTMLQELNLDFKSFLTEDTSLYGRLSPPGWDPRVHWASNLGGTCGGYAYQYVTAVQRLHPGSQMIVLEGRNSDIVEYRLLHDDRIIAAASELSGFRNIQNLVRKLTSGSGSERKRNITALRKRRTGPKANSREMAAATAATADPYHSDYIEVNACPGACMNGGGLLNGEQNSLKRKQLVQTLNKRHGEELAMVDPLTLGPKLEEAAARPLSLEYVFAPVKQAVEKDLVSVGSTW</sequence>
<organism>
    <name type="scientific">Saccharomyces cerevisiae (strain ATCC 204508 / S288c)</name>
    <name type="common">Baker's yeast</name>
    <dbReference type="NCBI Taxonomy" id="559292"/>
    <lineage>
        <taxon>Eukaryota</taxon>
        <taxon>Fungi</taxon>
        <taxon>Dikarya</taxon>
        <taxon>Ascomycota</taxon>
        <taxon>Saccharomycotina</taxon>
        <taxon>Saccharomycetes</taxon>
        <taxon>Saccharomycetales</taxon>
        <taxon>Saccharomycetaceae</taxon>
        <taxon>Saccharomyces</taxon>
    </lineage>
</organism>
<gene>
    <name type="primary">NAR1</name>
    <name type="ordered locus">YNL240C</name>
    <name type="ORF">N1114</name>
</gene>
<reference key="1">
    <citation type="journal article" date="1996" name="Yeast">
        <title>The DNA sequence of cosmid 14-5 from chromosome XIV reveals 21 open reading frames including a novel gene encoding a globin-like domain.</title>
        <authorList>
            <person name="Pandolfo D."/>
            <person name="de Antoni A."/>
            <person name="Lanfranchi G."/>
            <person name="Valle G."/>
        </authorList>
    </citation>
    <scope>NUCLEOTIDE SEQUENCE [GENOMIC DNA]</scope>
</reference>
<reference key="2">
    <citation type="journal article" date="1997" name="Nature">
        <title>The nucleotide sequence of Saccharomyces cerevisiae chromosome XIV and its evolutionary implications.</title>
        <authorList>
            <person name="Philippsen P."/>
            <person name="Kleine K."/>
            <person name="Poehlmann R."/>
            <person name="Duesterhoeft A."/>
            <person name="Hamberg K."/>
            <person name="Hegemann J.H."/>
            <person name="Obermaier B."/>
            <person name="Urrestarazu L.A."/>
            <person name="Aert R."/>
            <person name="Albermann K."/>
            <person name="Altmann R."/>
            <person name="Andre B."/>
            <person name="Baladron V."/>
            <person name="Ballesta J.P.G."/>
            <person name="Becam A.-M."/>
            <person name="Beinhauer J.D."/>
            <person name="Boskovic J."/>
            <person name="Buitrago M.J."/>
            <person name="Bussereau F."/>
            <person name="Coster F."/>
            <person name="Crouzet M."/>
            <person name="D'Angelo M."/>
            <person name="Dal Pero F."/>
            <person name="De Antoni A."/>
            <person name="del Rey F."/>
            <person name="Doignon F."/>
            <person name="Domdey H."/>
            <person name="Dubois E."/>
            <person name="Fiedler T.A."/>
            <person name="Fleig U."/>
            <person name="Floeth M."/>
            <person name="Fritz C."/>
            <person name="Gaillardin C."/>
            <person name="Garcia-Cantalejo J.M."/>
            <person name="Glansdorff N."/>
            <person name="Goffeau A."/>
            <person name="Gueldener U."/>
            <person name="Herbert C.J."/>
            <person name="Heumann K."/>
            <person name="Heuss-Neitzel D."/>
            <person name="Hilbert H."/>
            <person name="Hinni K."/>
            <person name="Iraqui Houssaini I."/>
            <person name="Jacquet M."/>
            <person name="Jimenez A."/>
            <person name="Jonniaux J.-L."/>
            <person name="Karpfinger-Hartl L."/>
            <person name="Lanfranchi G."/>
            <person name="Lepingle A."/>
            <person name="Levesque H."/>
            <person name="Lyck R."/>
            <person name="Maftahi M."/>
            <person name="Mallet L."/>
            <person name="Maurer C.T.C."/>
            <person name="Messenguy F."/>
            <person name="Mewes H.-W."/>
            <person name="Moestl D."/>
            <person name="Nasr F."/>
            <person name="Nicaud J.-M."/>
            <person name="Niedenthal R.K."/>
            <person name="Pandolfo D."/>
            <person name="Pierard A."/>
            <person name="Piravandi E."/>
            <person name="Planta R.J."/>
            <person name="Pohl T.M."/>
            <person name="Purnelle B."/>
            <person name="Rebischung C."/>
            <person name="Remacha M.A."/>
            <person name="Revuelta J.L."/>
            <person name="Rinke M."/>
            <person name="Saiz J.E."/>
            <person name="Sartorello F."/>
            <person name="Scherens B."/>
            <person name="Sen-Gupta M."/>
            <person name="Soler-Mira A."/>
            <person name="Urbanus J.H.M."/>
            <person name="Valle G."/>
            <person name="Van Dyck L."/>
            <person name="Verhasselt P."/>
            <person name="Vierendeels F."/>
            <person name="Vissers S."/>
            <person name="Voet M."/>
            <person name="Volckaert G."/>
            <person name="Wach A."/>
            <person name="Wambutt R."/>
            <person name="Wedler H."/>
            <person name="Zollner A."/>
            <person name="Hani J."/>
        </authorList>
    </citation>
    <scope>NUCLEOTIDE SEQUENCE [LARGE SCALE GENOMIC DNA]</scope>
    <source>
        <strain>ATCC 204508 / S288c</strain>
    </source>
</reference>
<reference key="3">
    <citation type="journal article" date="2014" name="G3 (Bethesda)">
        <title>The reference genome sequence of Saccharomyces cerevisiae: Then and now.</title>
        <authorList>
            <person name="Engel S.R."/>
            <person name="Dietrich F.S."/>
            <person name="Fisk D.G."/>
            <person name="Binkley G."/>
            <person name="Balakrishnan R."/>
            <person name="Costanzo M.C."/>
            <person name="Dwight S.S."/>
            <person name="Hitz B.C."/>
            <person name="Karra K."/>
            <person name="Nash R.S."/>
            <person name="Weng S."/>
            <person name="Wong E.D."/>
            <person name="Lloyd P."/>
            <person name="Skrzypek M.S."/>
            <person name="Miyasato S.R."/>
            <person name="Simison M."/>
            <person name="Cherry J.M."/>
        </authorList>
    </citation>
    <scope>GENOME REANNOTATION</scope>
    <source>
        <strain>ATCC 204508 / S288c</strain>
    </source>
</reference>
<reference key="4">
    <citation type="journal article" date="2007" name="Genome Res.">
        <title>Approaching a complete repository of sequence-verified protein-encoding clones for Saccharomyces cerevisiae.</title>
        <authorList>
            <person name="Hu Y."/>
            <person name="Rolfs A."/>
            <person name="Bhullar B."/>
            <person name="Murthy T.V.S."/>
            <person name="Zhu C."/>
            <person name="Berger M.F."/>
            <person name="Camargo A.A."/>
            <person name="Kelley F."/>
            <person name="McCarron S."/>
            <person name="Jepson D."/>
            <person name="Richardson A."/>
            <person name="Raphael J."/>
            <person name="Moreira D."/>
            <person name="Taycher E."/>
            <person name="Zuo D."/>
            <person name="Mohr S."/>
            <person name="Kane M.F."/>
            <person name="Williamson J."/>
            <person name="Simpson A.J.G."/>
            <person name="Bulyk M.L."/>
            <person name="Harlow E."/>
            <person name="Marsischky G."/>
            <person name="Kolodner R.D."/>
            <person name="LaBaer J."/>
        </authorList>
    </citation>
    <scope>NUCLEOTIDE SEQUENCE [GENOMIC DNA]</scope>
    <source>
        <strain>ATCC 204508 / S288c</strain>
    </source>
</reference>
<reference key="5">
    <citation type="journal article" date="1990" name="Gene">
        <title>Isolation and characterization of the ZWF1 gene of Saccharomyces cerevisiae, encoding glucose-6-phosphate dehydrogenase.</title>
        <authorList>
            <person name="Nogae I."/>
            <person name="Johnston M."/>
        </authorList>
    </citation>
    <scope>NUCLEOTIDE SEQUENCE [GENOMIC DNA] OF 147-491</scope>
</reference>
<reference key="6">
    <citation type="journal article" date="2004" name="EMBO J.">
        <title>The hydrogenase-like Nar1p is essential for maturation of cytosolic and nuclear iron-sulphur proteins.</title>
        <authorList>
            <person name="Balk J."/>
            <person name="Pierik A.J."/>
            <person name="Aguilar Netz D.J."/>
            <person name="Muehlenhoff U."/>
            <person name="Lill R."/>
        </authorList>
    </citation>
    <scope>FUNCTION</scope>
    <scope>SUBCELLULAR LOCATION</scope>
</reference>
<reference key="7">
    <citation type="journal article" date="2005" name="Biochem. Soc. Trans.">
        <title>Nar1p, a conserved eukaryotic protein with similarity to Fe-only hydrogenases, functions in cytosolic iron-sulphur protein biogenesis.</title>
        <authorList>
            <person name="Balk J."/>
            <person name="Pierik A.J."/>
            <person name="Aguilar Netz D.J."/>
            <person name="Muehlenhoff U."/>
            <person name="Lill R."/>
        </authorList>
    </citation>
    <scope>FUNCTION</scope>
</reference>
<reference key="8">
    <citation type="journal article" date="2005" name="Mol. Cell. Biol.">
        <title>The essential WD40 protein Cia1 is involved in a late step of cytosolic and nuclear iron-sulfur protein assembly.</title>
        <authorList>
            <person name="Balk J."/>
            <person name="Aguilar Netz D.J.A."/>
            <person name="Tepper K."/>
            <person name="Pierik A.J."/>
            <person name="Lill R."/>
        </authorList>
    </citation>
    <scope>INTERACTION WITH CIA1</scope>
</reference>
<reference key="9">
    <citation type="journal article" date="2009" name="Biochemistry">
        <title>Crucial role of conserved cysteine residues in the assembly of two iron-sulfur clusters on the CIA protein Nar1.</title>
        <authorList>
            <person name="Urzica E."/>
            <person name="Pierik A.J."/>
            <person name="Muehlenhoff U."/>
            <person name="Lill R."/>
        </authorList>
    </citation>
    <scope>FUNCTION</scope>
    <scope>EPR SPECTROSCOPY OF IRON-SULFUR CLUSTERS</scope>
    <scope>MUTAGENESIS OF CYS-20; CYS-59; CYS-62; CYS-65; CYS-177; CYS-231; CYS-412 AND CYS-416</scope>
</reference>
<keyword id="KW-0004">4Fe-4S</keyword>
<keyword id="KW-0963">Cytoplasm</keyword>
<keyword id="KW-0408">Iron</keyword>
<keyword id="KW-0411">Iron-sulfur</keyword>
<keyword id="KW-0479">Metal-binding</keyword>
<keyword id="KW-0539">Nucleus</keyword>
<keyword id="KW-1185">Reference proteome</keyword>
<protein>
    <recommendedName>
        <fullName>Cytosolic Fe-S cluster assembly factor NAR1</fullName>
    </recommendedName>
    <alternativeName>
        <fullName>Nuclear architecture-related protein 1</fullName>
    </alternativeName>
</protein>
<dbReference type="EMBL" id="Z69381">
    <property type="protein sequence ID" value="CAA93358.1"/>
    <property type="molecule type" value="Genomic_DNA"/>
</dbReference>
<dbReference type="EMBL" id="Z71516">
    <property type="protein sequence ID" value="CAA96145.1"/>
    <property type="molecule type" value="Genomic_DNA"/>
</dbReference>
<dbReference type="EMBL" id="AY692992">
    <property type="protein sequence ID" value="AAT93011.1"/>
    <property type="molecule type" value="Genomic_DNA"/>
</dbReference>
<dbReference type="EMBL" id="M34709">
    <property type="protein sequence ID" value="AAA34618.1"/>
    <property type="status" value="ALT_FRAME"/>
    <property type="molecule type" value="Genomic_DNA"/>
</dbReference>
<dbReference type="EMBL" id="BK006947">
    <property type="protein sequence ID" value="DAA10319.1"/>
    <property type="molecule type" value="Genomic_DNA"/>
</dbReference>
<dbReference type="PIR" id="S63206">
    <property type="entry name" value="S63206"/>
</dbReference>
<dbReference type="RefSeq" id="NP_014159.1">
    <property type="nucleotide sequence ID" value="NM_001183078.1"/>
</dbReference>
<dbReference type="SMR" id="P23503"/>
<dbReference type="BioGRID" id="35599">
    <property type="interactions" value="307"/>
</dbReference>
<dbReference type="FunCoup" id="P23503">
    <property type="interactions" value="467"/>
</dbReference>
<dbReference type="IntAct" id="P23503">
    <property type="interactions" value="7"/>
</dbReference>
<dbReference type="STRING" id="4932.YNL240C"/>
<dbReference type="iPTMnet" id="P23503"/>
<dbReference type="PaxDb" id="4932-YNL240C"/>
<dbReference type="PeptideAtlas" id="P23503"/>
<dbReference type="EnsemblFungi" id="YNL240C_mRNA">
    <property type="protein sequence ID" value="YNL240C"/>
    <property type="gene ID" value="YNL240C"/>
</dbReference>
<dbReference type="GeneID" id="855481"/>
<dbReference type="KEGG" id="sce:YNL240C"/>
<dbReference type="AGR" id="SGD:S000005184"/>
<dbReference type="SGD" id="S000005184">
    <property type="gene designation" value="NAR1"/>
</dbReference>
<dbReference type="VEuPathDB" id="FungiDB:YNL240C"/>
<dbReference type="eggNOG" id="KOG2439">
    <property type="taxonomic scope" value="Eukaryota"/>
</dbReference>
<dbReference type="GeneTree" id="ENSGT00940000153514"/>
<dbReference type="HOGENOM" id="CLU_018240_0_1_1"/>
<dbReference type="InParanoid" id="P23503"/>
<dbReference type="OMA" id="GYLHHVL"/>
<dbReference type="OrthoDB" id="10253113at2759"/>
<dbReference type="BioCyc" id="YEAST:G3O-33238-MONOMER"/>
<dbReference type="BioGRID-ORCS" id="855481">
    <property type="hits" value="6 hits in 10 CRISPR screens"/>
</dbReference>
<dbReference type="PRO" id="PR:P23503"/>
<dbReference type="Proteomes" id="UP000002311">
    <property type="component" value="Chromosome XIV"/>
</dbReference>
<dbReference type="RNAct" id="P23503">
    <property type="molecule type" value="protein"/>
</dbReference>
<dbReference type="GO" id="GO:0005829">
    <property type="term" value="C:cytosol"/>
    <property type="evidence" value="ECO:0000314"/>
    <property type="project" value="SGD"/>
</dbReference>
<dbReference type="GO" id="GO:0097361">
    <property type="term" value="C:cytosolic [4Fe-4S] assembly targeting complex"/>
    <property type="evidence" value="ECO:0000318"/>
    <property type="project" value="GO_Central"/>
</dbReference>
<dbReference type="GO" id="GO:0016020">
    <property type="term" value="C:membrane"/>
    <property type="evidence" value="ECO:0000314"/>
    <property type="project" value="SGD"/>
</dbReference>
<dbReference type="GO" id="GO:0005634">
    <property type="term" value="C:nucleus"/>
    <property type="evidence" value="ECO:0007669"/>
    <property type="project" value="UniProtKB-SubCell"/>
</dbReference>
<dbReference type="GO" id="GO:0051539">
    <property type="term" value="F:4 iron, 4 sulfur cluster binding"/>
    <property type="evidence" value="ECO:0007669"/>
    <property type="project" value="UniProtKB-KW"/>
</dbReference>
<dbReference type="GO" id="GO:0051536">
    <property type="term" value="F:iron-sulfur cluster binding"/>
    <property type="evidence" value="ECO:0000314"/>
    <property type="project" value="UniProtKB"/>
</dbReference>
<dbReference type="GO" id="GO:0046872">
    <property type="term" value="F:metal ion binding"/>
    <property type="evidence" value="ECO:0007669"/>
    <property type="project" value="UniProtKB-KW"/>
</dbReference>
<dbReference type="GO" id="GO:0016226">
    <property type="term" value="P:iron-sulfur cluster assembly"/>
    <property type="evidence" value="ECO:0000315"/>
    <property type="project" value="UniProtKB"/>
</dbReference>
<dbReference type="Gene3D" id="3.40.50.1780">
    <property type="match status" value="1"/>
</dbReference>
<dbReference type="Gene3D" id="3.40.950.10">
    <property type="entry name" value="Fe-only Hydrogenase (Larger Subunit), Chain L, domain 3"/>
    <property type="match status" value="1"/>
</dbReference>
<dbReference type="InterPro" id="IPR050340">
    <property type="entry name" value="Cytosolic_Fe-S_CAF"/>
</dbReference>
<dbReference type="InterPro" id="IPR009016">
    <property type="entry name" value="Fe_hydrogenase"/>
</dbReference>
<dbReference type="InterPro" id="IPR004108">
    <property type="entry name" value="Fe_hydrogenase_lsu_C"/>
</dbReference>
<dbReference type="PANTHER" id="PTHR11615">
    <property type="entry name" value="NITRATE, FORMATE, IRON DEHYDROGENASE"/>
    <property type="match status" value="1"/>
</dbReference>
<dbReference type="Pfam" id="PF02906">
    <property type="entry name" value="Fe_hyd_lg_C"/>
    <property type="match status" value="1"/>
</dbReference>
<dbReference type="SUPFAM" id="SSF53920">
    <property type="entry name" value="Fe-only hydrogenase"/>
    <property type="match status" value="1"/>
</dbReference>
<accession>P23503</accession>
<accession>D6W0V3</accession>
<comment type="function">
    <text evidence="1 2 4">Essential component of a cytosolic Fe/S protein assembly machinery. Required for maturation of extramitochondrial Fe/S proteins. May play a role in the transfer of pre-assembled Fe/S clusters to target apoproteins.</text>
</comment>
<comment type="subunit">
    <text evidence="3">Interacts with CIA1.</text>
</comment>
<comment type="interaction">
    <interactant intactId="EBI-11864">
        <id>P23503</id>
    </interactant>
    <interactant intactId="EBI-32145">
        <id>Q05583</id>
        <label>CIA1</label>
    </interactant>
    <organismsDiffer>false</organismsDiffer>
    <experiments>3</experiments>
</comment>
<comment type="subcellular location">
    <subcellularLocation>
        <location evidence="1">Cytoplasm</location>
    </subcellularLocation>
    <subcellularLocation>
        <location evidence="1">Nucleus</location>
    </subcellularLocation>
    <text>Predominantly cytoplasmic.</text>
</comment>
<comment type="similarity">
    <text evidence="5">Belongs to the NARF family.</text>
</comment>
<comment type="sequence caution" evidence="5">
    <conflict type="frameshift">
        <sequence resource="EMBL-CDS" id="AAA34618"/>
    </conflict>
</comment>
<name>NAR1_YEAST</name>